<protein>
    <recommendedName>
        <fullName>UPF0588 membrane protein C20F10.02c</fullName>
    </recommendedName>
</protein>
<evidence type="ECO:0000255" key="1"/>
<evidence type="ECO:0000305" key="2"/>
<organism>
    <name type="scientific">Schizosaccharomyces pombe (strain 972 / ATCC 24843)</name>
    <name type="common">Fission yeast</name>
    <dbReference type="NCBI Taxonomy" id="284812"/>
    <lineage>
        <taxon>Eukaryota</taxon>
        <taxon>Fungi</taxon>
        <taxon>Dikarya</taxon>
        <taxon>Ascomycota</taxon>
        <taxon>Taphrinomycotina</taxon>
        <taxon>Schizosaccharomycetes</taxon>
        <taxon>Schizosaccharomycetales</taxon>
        <taxon>Schizosaccharomycetaceae</taxon>
        <taxon>Schizosaccharomyces</taxon>
    </lineage>
</organism>
<reference key="1">
    <citation type="journal article" date="2002" name="Nature">
        <title>The genome sequence of Schizosaccharomyces pombe.</title>
        <authorList>
            <person name="Wood V."/>
            <person name="Gwilliam R."/>
            <person name="Rajandream M.A."/>
            <person name="Lyne M.H."/>
            <person name="Lyne R."/>
            <person name="Stewart A."/>
            <person name="Sgouros J.G."/>
            <person name="Peat N."/>
            <person name="Hayles J."/>
            <person name="Baker S.G."/>
            <person name="Basham D."/>
            <person name="Bowman S."/>
            <person name="Brooks K."/>
            <person name="Brown D."/>
            <person name="Brown S."/>
            <person name="Chillingworth T."/>
            <person name="Churcher C.M."/>
            <person name="Collins M."/>
            <person name="Connor R."/>
            <person name="Cronin A."/>
            <person name="Davis P."/>
            <person name="Feltwell T."/>
            <person name="Fraser A."/>
            <person name="Gentles S."/>
            <person name="Goble A."/>
            <person name="Hamlin N."/>
            <person name="Harris D.E."/>
            <person name="Hidalgo J."/>
            <person name="Hodgson G."/>
            <person name="Holroyd S."/>
            <person name="Hornsby T."/>
            <person name="Howarth S."/>
            <person name="Huckle E.J."/>
            <person name="Hunt S."/>
            <person name="Jagels K."/>
            <person name="James K.D."/>
            <person name="Jones L."/>
            <person name="Jones M."/>
            <person name="Leather S."/>
            <person name="McDonald S."/>
            <person name="McLean J."/>
            <person name="Mooney P."/>
            <person name="Moule S."/>
            <person name="Mungall K.L."/>
            <person name="Murphy L.D."/>
            <person name="Niblett D."/>
            <person name="Odell C."/>
            <person name="Oliver K."/>
            <person name="O'Neil S."/>
            <person name="Pearson D."/>
            <person name="Quail M.A."/>
            <person name="Rabbinowitsch E."/>
            <person name="Rutherford K.M."/>
            <person name="Rutter S."/>
            <person name="Saunders D."/>
            <person name="Seeger K."/>
            <person name="Sharp S."/>
            <person name="Skelton J."/>
            <person name="Simmonds M.N."/>
            <person name="Squares R."/>
            <person name="Squares S."/>
            <person name="Stevens K."/>
            <person name="Taylor K."/>
            <person name="Taylor R.G."/>
            <person name="Tivey A."/>
            <person name="Walsh S.V."/>
            <person name="Warren T."/>
            <person name="Whitehead S."/>
            <person name="Woodward J.R."/>
            <person name="Volckaert G."/>
            <person name="Aert R."/>
            <person name="Robben J."/>
            <person name="Grymonprez B."/>
            <person name="Weltjens I."/>
            <person name="Vanstreels E."/>
            <person name="Rieger M."/>
            <person name="Schaefer M."/>
            <person name="Mueller-Auer S."/>
            <person name="Gabel C."/>
            <person name="Fuchs M."/>
            <person name="Duesterhoeft A."/>
            <person name="Fritzc C."/>
            <person name="Holzer E."/>
            <person name="Moestl D."/>
            <person name="Hilbert H."/>
            <person name="Borzym K."/>
            <person name="Langer I."/>
            <person name="Beck A."/>
            <person name="Lehrach H."/>
            <person name="Reinhardt R."/>
            <person name="Pohl T.M."/>
            <person name="Eger P."/>
            <person name="Zimmermann W."/>
            <person name="Wedler H."/>
            <person name="Wambutt R."/>
            <person name="Purnelle B."/>
            <person name="Goffeau A."/>
            <person name="Cadieu E."/>
            <person name="Dreano S."/>
            <person name="Gloux S."/>
            <person name="Lelaure V."/>
            <person name="Mottier S."/>
            <person name="Galibert F."/>
            <person name="Aves S.J."/>
            <person name="Xiang Z."/>
            <person name="Hunt C."/>
            <person name="Moore K."/>
            <person name="Hurst S.M."/>
            <person name="Lucas M."/>
            <person name="Rochet M."/>
            <person name="Gaillardin C."/>
            <person name="Tallada V.A."/>
            <person name="Garzon A."/>
            <person name="Thode G."/>
            <person name="Daga R.R."/>
            <person name="Cruzado L."/>
            <person name="Jimenez J."/>
            <person name="Sanchez M."/>
            <person name="del Rey F."/>
            <person name="Benito J."/>
            <person name="Dominguez A."/>
            <person name="Revuelta J.L."/>
            <person name="Moreno S."/>
            <person name="Armstrong J."/>
            <person name="Forsburg S.L."/>
            <person name="Cerutti L."/>
            <person name="Lowe T."/>
            <person name="McCombie W.R."/>
            <person name="Paulsen I."/>
            <person name="Potashkin J."/>
            <person name="Shpakovski G.V."/>
            <person name="Ussery D."/>
            <person name="Barrell B.G."/>
            <person name="Nurse P."/>
        </authorList>
    </citation>
    <scope>NUCLEOTIDE SEQUENCE [LARGE SCALE GENOMIC DNA]</scope>
    <source>
        <strain>972 / ATCC 24843</strain>
    </source>
</reference>
<keyword id="KW-0472">Membrane</keyword>
<keyword id="KW-1185">Reference proteome</keyword>
<keyword id="KW-0812">Transmembrane</keyword>
<keyword id="KW-1133">Transmembrane helix</keyword>
<sequence>MHRAAAVDTTPKIVFYYKCLLNKNWNEPINNIFWGEFFLLQPRLEVLSQLLRECPKQELTVNGPKFHSMYLYISEILKSKAESLRIRNSLATLQTFLAELSVRKPTDVNFTIFLLLGNIDSIDIQFSAFIKNLCQLVKDSEDVQSVEISLRFVLHFVSFLYNSSFISHIYGNYDVFSTLYTVILKRKFGFETAVYAIGLLSACDKFETVNTFRLGLSKIVDEEFFSSVLSSSAQQLISLRDFYVSIKPDNPLTGSFFNLFSLRSSSNNPDSDQESQFSRLPDERATMFFTIYELCCCNKLFLKKLVEGGEKNGEAPLEALLSLLSYINTHQRQSERSHHFSILSLILFHIIIDDRSLLYRLTDKKFKISVRVCSQRYPYPPNATKPATPLGYMLDICCIGIQHNMKLNLSATMYFLYFSFVYRAMTSLVQDGIRMEYHWLELWRVLFSFLDFVSVLINTSPTEDVTRLLELILDVLAYIISNGDALVIRSDELVDLFYKLLHSSKNFSSFSSKIPDERLGALNYLLEVTEYLTSKTVDLPRSTADEVESVIKLELESIPVAKQNAFGGVPPFKESQYRLFHKRASRGMADLLRRKSEAAN</sequence>
<comment type="subcellular location">
    <subcellularLocation>
        <location evidence="2">Membrane</location>
        <topology evidence="2">Multi-pass membrane protein</topology>
    </subcellularLocation>
</comment>
<comment type="similarity">
    <text evidence="2">Belongs to the UPF0588 family.</text>
</comment>
<gene>
    <name type="ORF">SPBC20F10.02c</name>
</gene>
<dbReference type="EMBL" id="CU329671">
    <property type="protein sequence ID" value="CAA16842.1"/>
    <property type="molecule type" value="Genomic_DNA"/>
</dbReference>
<dbReference type="PIR" id="T39873">
    <property type="entry name" value="T39873"/>
</dbReference>
<dbReference type="RefSeq" id="NP_596366.1">
    <property type="nucleotide sequence ID" value="NM_001022287.2"/>
</dbReference>
<dbReference type="BioGRID" id="277221">
    <property type="interactions" value="1"/>
</dbReference>
<dbReference type="FunCoup" id="O42972">
    <property type="interactions" value="626"/>
</dbReference>
<dbReference type="STRING" id="284812.O42972"/>
<dbReference type="PaxDb" id="4896-SPBC20F10.02c.1"/>
<dbReference type="EnsemblFungi" id="SPBC20F10.02c.1">
    <property type="protein sequence ID" value="SPBC20F10.02c.1:pep"/>
    <property type="gene ID" value="SPBC20F10.02c"/>
</dbReference>
<dbReference type="KEGG" id="spo:2540697"/>
<dbReference type="PomBase" id="SPBC20F10.02c"/>
<dbReference type="VEuPathDB" id="FungiDB:SPBC20F10.02c"/>
<dbReference type="eggNOG" id="KOG4654">
    <property type="taxonomic scope" value="Eukaryota"/>
</dbReference>
<dbReference type="HOGENOM" id="CLU_029861_1_1_1"/>
<dbReference type="InParanoid" id="O42972"/>
<dbReference type="OMA" id="YEATHLN"/>
<dbReference type="PhylomeDB" id="O42972"/>
<dbReference type="PRO" id="PR:O42972"/>
<dbReference type="Proteomes" id="UP000002485">
    <property type="component" value="Chromosome II"/>
</dbReference>
<dbReference type="GO" id="GO:0005829">
    <property type="term" value="C:cytosol"/>
    <property type="evidence" value="ECO:0007005"/>
    <property type="project" value="PomBase"/>
</dbReference>
<dbReference type="GO" id="GO:0016020">
    <property type="term" value="C:membrane"/>
    <property type="evidence" value="ECO:0007669"/>
    <property type="project" value="UniProtKB-SubCell"/>
</dbReference>
<dbReference type="GO" id="GO:0005634">
    <property type="term" value="C:nucleus"/>
    <property type="evidence" value="ECO:0007005"/>
    <property type="project" value="PomBase"/>
</dbReference>
<dbReference type="GO" id="GO:0006893">
    <property type="term" value="P:Golgi to plasma membrane transport"/>
    <property type="evidence" value="ECO:0000304"/>
    <property type="project" value="PomBase"/>
</dbReference>
<dbReference type="InterPro" id="IPR039868">
    <property type="entry name" value="ARMD3-like"/>
</dbReference>
<dbReference type="InterPro" id="IPR013636">
    <property type="entry name" value="ARMH3_C"/>
</dbReference>
<dbReference type="PANTHER" id="PTHR13608">
    <property type="entry name" value="ARMADILLO-LIKE HELICAL DOMAIN-CONTAINING PROTEIN 3"/>
    <property type="match status" value="1"/>
</dbReference>
<dbReference type="PANTHER" id="PTHR13608:SF3">
    <property type="entry name" value="ARMADILLO-LIKE HELICAL DOMAIN-CONTAINING PROTEIN 3"/>
    <property type="match status" value="1"/>
</dbReference>
<dbReference type="Pfam" id="PF08427">
    <property type="entry name" value="ARMH3_C"/>
    <property type="match status" value="1"/>
</dbReference>
<dbReference type="SMART" id="SM01158">
    <property type="entry name" value="DUF1741"/>
    <property type="match status" value="1"/>
</dbReference>
<feature type="chain" id="PRO_0000339159" description="UPF0588 membrane protein C20F10.02c">
    <location>
        <begin position="1"/>
        <end position="600"/>
    </location>
</feature>
<feature type="transmembrane region" description="Helical" evidence="1">
    <location>
        <begin position="409"/>
        <end position="429"/>
    </location>
</feature>
<feature type="transmembrane region" description="Helical" evidence="1">
    <location>
        <begin position="437"/>
        <end position="457"/>
    </location>
</feature>
<accession>O42972</accession>
<proteinExistence type="inferred from homology"/>
<name>YGZ2_SCHPO</name>